<name>ATG17_CANAL</name>
<keyword id="KW-0072">Autophagy</keyword>
<keyword id="KW-0963">Cytoplasm</keyword>
<keyword id="KW-0472">Membrane</keyword>
<keyword id="KW-1185">Reference proteome</keyword>
<proteinExistence type="inferred from homology"/>
<feature type="chain" id="PRO_0000124557" description="Autophagy-related protein 17">
    <location>
        <begin position="1"/>
        <end position="476"/>
    </location>
</feature>
<feature type="sequence conflict" description="In Ref. 1; CAA21977." evidence="2" ref="1">
    <original>K</original>
    <variation>N</variation>
    <location>
        <position position="301"/>
    </location>
</feature>
<protein>
    <recommendedName>
        <fullName>Autophagy-related protein 17</fullName>
    </recommendedName>
</protein>
<reference key="1">
    <citation type="submission" date="1998-11" db="EMBL/GenBank/DDBJ databases">
        <title>Candida albicans strain 1161 genome pilot sequencing project.</title>
        <authorList>
            <person name="Oliver K."/>
            <person name="Harris D."/>
            <person name="Barrell B.G."/>
            <person name="Rajandream M.A."/>
        </authorList>
    </citation>
    <scope>NUCLEOTIDE SEQUENCE [LARGE SCALE GENOMIC DNA]</scope>
    <source>
        <strain>1161</strain>
    </source>
</reference>
<reference key="2">
    <citation type="journal article" date="2004" name="Proc. Natl. Acad. Sci. U.S.A.">
        <title>The diploid genome sequence of Candida albicans.</title>
        <authorList>
            <person name="Jones T."/>
            <person name="Federspiel N.A."/>
            <person name="Chibana H."/>
            <person name="Dungan J."/>
            <person name="Kalman S."/>
            <person name="Magee B.B."/>
            <person name="Newport G."/>
            <person name="Thorstenson Y.R."/>
            <person name="Agabian N."/>
            <person name="Magee P.T."/>
            <person name="Davis R.W."/>
            <person name="Scherer S."/>
        </authorList>
    </citation>
    <scope>NUCLEOTIDE SEQUENCE [LARGE SCALE GENOMIC DNA]</scope>
    <source>
        <strain>SC5314 / ATCC MYA-2876</strain>
    </source>
</reference>
<reference key="3">
    <citation type="journal article" date="2007" name="Genome Biol.">
        <title>Assembly of the Candida albicans genome into sixteen supercontigs aligned on the eight chromosomes.</title>
        <authorList>
            <person name="van het Hoog M."/>
            <person name="Rast T.J."/>
            <person name="Martchenko M."/>
            <person name="Grindle S."/>
            <person name="Dignard D."/>
            <person name="Hogues H."/>
            <person name="Cuomo C."/>
            <person name="Berriman M."/>
            <person name="Scherer S."/>
            <person name="Magee B.B."/>
            <person name="Whiteway M."/>
            <person name="Chibana H."/>
            <person name="Nantel A."/>
            <person name="Magee P.T."/>
        </authorList>
    </citation>
    <scope>GENOME REANNOTATION</scope>
    <source>
        <strain>SC5314 / ATCC MYA-2876</strain>
    </source>
</reference>
<reference key="4">
    <citation type="journal article" date="2013" name="Genome Biol.">
        <title>Assembly of a phased diploid Candida albicans genome facilitates allele-specific measurements and provides a simple model for repeat and indel structure.</title>
        <authorList>
            <person name="Muzzey D."/>
            <person name="Schwartz K."/>
            <person name="Weissman J.S."/>
            <person name="Sherlock G."/>
        </authorList>
    </citation>
    <scope>NUCLEOTIDE SEQUENCE [LARGE SCALE GENOMIC DNA]</scope>
    <scope>GENOME REANNOTATION</scope>
    <source>
        <strain>SC5314 / ATCC MYA-2876</strain>
    </source>
</reference>
<comment type="function">
    <text evidence="1">Autophagy-specific protein that functions in response to autophagy-inducing signals as a scaffold to recruit other ATG proteins to organize pre-autophagosomal structure (PAS) formation. Modulates the timing and magnitude of the autophagy response, such as the size of the sequestering vesicles. Plays particularly a role in pexophagy and nucleophagy (By similarity).</text>
</comment>
<comment type="subcellular location">
    <subcellularLocation>
        <location evidence="1">Cytoplasm</location>
    </subcellularLocation>
    <subcellularLocation>
        <location evidence="1">Preautophagosomal structure membrane</location>
        <topology evidence="1">Peripheral membrane protein</topology>
    </subcellularLocation>
</comment>
<comment type="similarity">
    <text evidence="2">Belongs to the ATG17 family.</text>
</comment>
<evidence type="ECO:0000250" key="1"/>
<evidence type="ECO:0000305" key="2"/>
<sequence length="476" mass="55407">MTNEINSATVTQDEVIKWSREAQSTLEKTQKICTDAQSSMQKTAQELTILIPDKLQAIEFLFKSYREQYDSILKQIETTKIYLHTNIDKVFNDIKDLLDPSLARLNNILLELKKTRVPSIVVEGTSEGKTLFDFTSIQSINLLKENIGIFKSNCSKIKNLLDLEVKEKLNIEQDRMNSRWNKSVKMYDLIAPLQLELRALIHGASNESNSFMGTILRENQALENELVSILEMQTNHFDQCMKAVELISSGNGCDMNLGVLKNDAQELPEVFKELTTIYDIILRNEERSKKFLATHMPNIEKISDIVKEELAVFRKFKTEEIPRYTFLIAECENKLKECSMPVKSDQSPSQVYTQTLQELTEHYVKFINIYKTKYLAELHHQQFTYPRKFLKKLTEFLNEDIYRIQIEESERRRQWTSRYGEFIPSEFKLPGEHELPVIVQIITEGLEYIQKEDGQEEEPNIGNEKELMDMITGSNK</sequence>
<dbReference type="EMBL" id="AL033497">
    <property type="protein sequence ID" value="CAA21977.1"/>
    <property type="molecule type" value="Genomic_DNA"/>
</dbReference>
<dbReference type="EMBL" id="CP017623">
    <property type="protein sequence ID" value="AOW25972.1"/>
    <property type="molecule type" value="Genomic_DNA"/>
</dbReference>
<dbReference type="PIR" id="T52157">
    <property type="entry name" value="T52157"/>
</dbReference>
<dbReference type="RefSeq" id="XP_721480.1">
    <property type="nucleotide sequence ID" value="XM_716387.1"/>
</dbReference>
<dbReference type="SMR" id="Q5AI71"/>
<dbReference type="FunCoup" id="Q5AI71">
    <property type="interactions" value="161"/>
</dbReference>
<dbReference type="STRING" id="237561.Q5AI71"/>
<dbReference type="EnsemblFungi" id="C1_02910C_A-T">
    <property type="protein sequence ID" value="C1_02910C_A-T-p1"/>
    <property type="gene ID" value="C1_02910C_A"/>
</dbReference>
<dbReference type="GeneID" id="3636829"/>
<dbReference type="KEGG" id="cal:CAALFM_C102910CA"/>
<dbReference type="CGD" id="CAL0000200723">
    <property type="gene designation" value="ATG17"/>
</dbReference>
<dbReference type="VEuPathDB" id="FungiDB:C1_02910C_A"/>
<dbReference type="eggNOG" id="ENOG502RW77">
    <property type="taxonomic scope" value="Eukaryota"/>
</dbReference>
<dbReference type="HOGENOM" id="CLU_565132_0_0_1"/>
<dbReference type="InParanoid" id="Q5AI71"/>
<dbReference type="OMA" id="TNHFDQC"/>
<dbReference type="OrthoDB" id="1937984at2759"/>
<dbReference type="PRO" id="PR:Q5AI71"/>
<dbReference type="Proteomes" id="UP000000559">
    <property type="component" value="Chromosome 1"/>
</dbReference>
<dbReference type="GO" id="GO:1990316">
    <property type="term" value="C:Atg1/ULK1 kinase complex"/>
    <property type="evidence" value="ECO:0000318"/>
    <property type="project" value="GO_Central"/>
</dbReference>
<dbReference type="GO" id="GO:0000407">
    <property type="term" value="C:phagophore assembly site"/>
    <property type="evidence" value="ECO:0000318"/>
    <property type="project" value="GO_Central"/>
</dbReference>
<dbReference type="GO" id="GO:0034045">
    <property type="term" value="C:phagophore assembly site membrane"/>
    <property type="evidence" value="ECO:0007669"/>
    <property type="project" value="UniProtKB-SubCell"/>
</dbReference>
<dbReference type="GO" id="GO:0060090">
    <property type="term" value="F:molecular adaptor activity"/>
    <property type="evidence" value="ECO:0000318"/>
    <property type="project" value="GO_Central"/>
</dbReference>
<dbReference type="GO" id="GO:0030295">
    <property type="term" value="F:protein kinase activator activity"/>
    <property type="evidence" value="ECO:0000318"/>
    <property type="project" value="GO_Central"/>
</dbReference>
<dbReference type="GO" id="GO:0000045">
    <property type="term" value="P:autophagosome assembly"/>
    <property type="evidence" value="ECO:0000318"/>
    <property type="project" value="GO_Central"/>
</dbReference>
<dbReference type="GO" id="GO:0006974">
    <property type="term" value="P:DNA damage response"/>
    <property type="evidence" value="ECO:0000315"/>
    <property type="project" value="CGD"/>
</dbReference>
<dbReference type="GO" id="GO:0000423">
    <property type="term" value="P:mitophagy"/>
    <property type="evidence" value="ECO:0000318"/>
    <property type="project" value="GO_Central"/>
</dbReference>
<dbReference type="GO" id="GO:0000425">
    <property type="term" value="P:pexophagy"/>
    <property type="evidence" value="ECO:0000318"/>
    <property type="project" value="GO_Central"/>
</dbReference>
<dbReference type="GO" id="GO:0034727">
    <property type="term" value="P:piecemeal microautophagy of the nucleus"/>
    <property type="evidence" value="ECO:0000318"/>
    <property type="project" value="GO_Central"/>
</dbReference>
<dbReference type="InterPro" id="IPR007240">
    <property type="entry name" value="Atg17"/>
</dbReference>
<dbReference type="InterPro" id="IPR045326">
    <property type="entry name" value="ATG17-like_dom"/>
</dbReference>
<dbReference type="PANTHER" id="PTHR28005">
    <property type="entry name" value="AUTOPHAGY-RELATED PROTEIN 17"/>
    <property type="match status" value="1"/>
</dbReference>
<dbReference type="PANTHER" id="PTHR28005:SF1">
    <property type="entry name" value="AUTOPHAGY-RELATED PROTEIN 17"/>
    <property type="match status" value="1"/>
</dbReference>
<dbReference type="Pfam" id="PF04108">
    <property type="entry name" value="ATG17_like"/>
    <property type="match status" value="1"/>
</dbReference>
<accession>Q5AI71</accession>
<accession>A0A1D8PCV4</accession>
<accession>O94027</accession>
<organism>
    <name type="scientific">Candida albicans (strain SC5314 / ATCC MYA-2876)</name>
    <name type="common">Yeast</name>
    <dbReference type="NCBI Taxonomy" id="237561"/>
    <lineage>
        <taxon>Eukaryota</taxon>
        <taxon>Fungi</taxon>
        <taxon>Dikarya</taxon>
        <taxon>Ascomycota</taxon>
        <taxon>Saccharomycotina</taxon>
        <taxon>Pichiomycetes</taxon>
        <taxon>Debaryomycetaceae</taxon>
        <taxon>Candida/Lodderomyces clade</taxon>
        <taxon>Candida</taxon>
    </lineage>
</organism>
<gene>
    <name type="primary">ATG17</name>
    <name type="ordered locus">CAALFM_C102910CA</name>
    <name type="ORF">Ca49C10.13</name>
    <name type="ORF">CaO19.10499</name>
    <name type="ORF">CaO19.2982</name>
</gene>